<reference key="1">
    <citation type="journal article" date="2001" name="Nature">
        <title>Complete genome sequence of Salmonella enterica serovar Typhimurium LT2.</title>
        <authorList>
            <person name="McClelland M."/>
            <person name="Sanderson K.E."/>
            <person name="Spieth J."/>
            <person name="Clifton S.W."/>
            <person name="Latreille P."/>
            <person name="Courtney L."/>
            <person name="Porwollik S."/>
            <person name="Ali J."/>
            <person name="Dante M."/>
            <person name="Du F."/>
            <person name="Hou S."/>
            <person name="Layman D."/>
            <person name="Leonard S."/>
            <person name="Nguyen C."/>
            <person name="Scott K."/>
            <person name="Holmes A."/>
            <person name="Grewal N."/>
            <person name="Mulvaney E."/>
            <person name="Ryan E."/>
            <person name="Sun H."/>
            <person name="Florea L."/>
            <person name="Miller W."/>
            <person name="Stoneking T."/>
            <person name="Nhan M."/>
            <person name="Waterston R."/>
            <person name="Wilson R.K."/>
        </authorList>
    </citation>
    <scope>NUCLEOTIDE SEQUENCE [LARGE SCALE GENOMIC DNA]</scope>
    <source>
        <strain>LT2 / SGSC1412 / ATCC 700720</strain>
    </source>
</reference>
<name>IPYR_SALTY</name>
<keyword id="KW-0963">Cytoplasm</keyword>
<keyword id="KW-0378">Hydrolase</keyword>
<keyword id="KW-0460">Magnesium</keyword>
<keyword id="KW-0479">Metal-binding</keyword>
<keyword id="KW-1185">Reference proteome</keyword>
<sequence length="176" mass="19677">MSLLNVPAGKELPEDIYVVIEIPANADPIKYEVDKESGALFVDRFMSTAMFYPCNYGYINHTLSLDGDPVDVLVPTPYPLQPGAVIRCRPVGVLKMTDESGEDAKLVAVPHTKLSKEYDHIKDVNDLPELLKAQITHFFEHYKDLEKGKWVKVDGWDNAEAAKAEIVASFERAAKK</sequence>
<evidence type="ECO:0000250" key="1"/>
<evidence type="ECO:0000255" key="2">
    <source>
        <dbReference type="HAMAP-Rule" id="MF_00209"/>
    </source>
</evidence>
<organism>
    <name type="scientific">Salmonella typhimurium (strain LT2 / SGSC1412 / ATCC 700720)</name>
    <dbReference type="NCBI Taxonomy" id="99287"/>
    <lineage>
        <taxon>Bacteria</taxon>
        <taxon>Pseudomonadati</taxon>
        <taxon>Pseudomonadota</taxon>
        <taxon>Gammaproteobacteria</taxon>
        <taxon>Enterobacterales</taxon>
        <taxon>Enterobacteriaceae</taxon>
        <taxon>Salmonella</taxon>
    </lineage>
</organism>
<feature type="initiator methionine" description="Removed" evidence="1">
    <location>
        <position position="1"/>
    </location>
</feature>
<feature type="chain" id="PRO_0000137530" description="Inorganic pyrophosphatase">
    <location>
        <begin position="2"/>
        <end position="176"/>
    </location>
</feature>
<feature type="binding site" evidence="2">
    <location>
        <position position="30"/>
    </location>
    <ligand>
        <name>substrate</name>
    </ligand>
</feature>
<feature type="binding site" evidence="2">
    <location>
        <position position="44"/>
    </location>
    <ligand>
        <name>substrate</name>
    </ligand>
</feature>
<feature type="binding site" evidence="2">
    <location>
        <position position="56"/>
    </location>
    <ligand>
        <name>substrate</name>
    </ligand>
</feature>
<feature type="binding site" evidence="2">
    <location>
        <position position="66"/>
    </location>
    <ligand>
        <name>Mg(2+)</name>
        <dbReference type="ChEBI" id="CHEBI:18420"/>
        <label>1</label>
    </ligand>
</feature>
<feature type="binding site" evidence="2">
    <location>
        <position position="71"/>
    </location>
    <ligand>
        <name>Mg(2+)</name>
        <dbReference type="ChEBI" id="CHEBI:18420"/>
        <label>1</label>
    </ligand>
</feature>
<feature type="binding site" evidence="2">
    <location>
        <position position="71"/>
    </location>
    <ligand>
        <name>Mg(2+)</name>
        <dbReference type="ChEBI" id="CHEBI:18420"/>
        <label>2</label>
    </ligand>
</feature>
<feature type="binding site" evidence="2">
    <location>
        <position position="103"/>
    </location>
    <ligand>
        <name>Mg(2+)</name>
        <dbReference type="ChEBI" id="CHEBI:18420"/>
        <label>1</label>
    </ligand>
</feature>
<feature type="binding site" evidence="2">
    <location>
        <position position="142"/>
    </location>
    <ligand>
        <name>substrate</name>
    </ligand>
</feature>
<proteinExistence type="inferred from homology"/>
<dbReference type="EC" id="3.6.1.1" evidence="2"/>
<dbReference type="EMBL" id="AE006468">
    <property type="protein sequence ID" value="AAL23234.1"/>
    <property type="molecule type" value="Genomic_DNA"/>
</dbReference>
<dbReference type="RefSeq" id="NP_463275.1">
    <property type="nucleotide sequence ID" value="NC_003197.2"/>
</dbReference>
<dbReference type="RefSeq" id="WP_000055079.1">
    <property type="nucleotide sequence ID" value="NC_003197.2"/>
</dbReference>
<dbReference type="SMR" id="P65748"/>
<dbReference type="STRING" id="99287.STM4414"/>
<dbReference type="PaxDb" id="99287-STM4414"/>
<dbReference type="GeneID" id="1255940"/>
<dbReference type="KEGG" id="stm:STM4414"/>
<dbReference type="PATRIC" id="fig|99287.12.peg.4641"/>
<dbReference type="HOGENOM" id="CLU_073198_1_0_6"/>
<dbReference type="OMA" id="IHHVSEF"/>
<dbReference type="PhylomeDB" id="P65748"/>
<dbReference type="BioCyc" id="SENT99287:STM4414-MONOMER"/>
<dbReference type="Proteomes" id="UP000001014">
    <property type="component" value="Chromosome"/>
</dbReference>
<dbReference type="GO" id="GO:0005829">
    <property type="term" value="C:cytosol"/>
    <property type="evidence" value="ECO:0000318"/>
    <property type="project" value="GO_Central"/>
</dbReference>
<dbReference type="GO" id="GO:0004427">
    <property type="term" value="F:inorganic diphosphate phosphatase activity"/>
    <property type="evidence" value="ECO:0000318"/>
    <property type="project" value="GO_Central"/>
</dbReference>
<dbReference type="GO" id="GO:0000287">
    <property type="term" value="F:magnesium ion binding"/>
    <property type="evidence" value="ECO:0000318"/>
    <property type="project" value="GO_Central"/>
</dbReference>
<dbReference type="GO" id="GO:0006796">
    <property type="term" value="P:phosphate-containing compound metabolic process"/>
    <property type="evidence" value="ECO:0000318"/>
    <property type="project" value="GO_Central"/>
</dbReference>
<dbReference type="CDD" id="cd00412">
    <property type="entry name" value="pyrophosphatase"/>
    <property type="match status" value="1"/>
</dbReference>
<dbReference type="FunFam" id="3.90.80.10:FF:000001">
    <property type="entry name" value="Inorganic pyrophosphatase"/>
    <property type="match status" value="1"/>
</dbReference>
<dbReference type="Gene3D" id="3.90.80.10">
    <property type="entry name" value="Inorganic pyrophosphatase"/>
    <property type="match status" value="1"/>
</dbReference>
<dbReference type="HAMAP" id="MF_00209">
    <property type="entry name" value="Inorganic_PPase"/>
    <property type="match status" value="1"/>
</dbReference>
<dbReference type="InterPro" id="IPR008162">
    <property type="entry name" value="Pyrophosphatase"/>
</dbReference>
<dbReference type="InterPro" id="IPR036649">
    <property type="entry name" value="Pyrophosphatase_sf"/>
</dbReference>
<dbReference type="NCBIfam" id="NF002317">
    <property type="entry name" value="PRK01250.1"/>
    <property type="match status" value="1"/>
</dbReference>
<dbReference type="PANTHER" id="PTHR10286">
    <property type="entry name" value="INORGANIC PYROPHOSPHATASE"/>
    <property type="match status" value="1"/>
</dbReference>
<dbReference type="Pfam" id="PF00719">
    <property type="entry name" value="Pyrophosphatase"/>
    <property type="match status" value="1"/>
</dbReference>
<dbReference type="SUPFAM" id="SSF50324">
    <property type="entry name" value="Inorganic pyrophosphatase"/>
    <property type="match status" value="1"/>
</dbReference>
<dbReference type="PROSITE" id="PS00387">
    <property type="entry name" value="PPASE"/>
    <property type="match status" value="1"/>
</dbReference>
<accession>P65748</accession>
<accession>Q8XGI0</accession>
<gene>
    <name evidence="2" type="primary">ppa</name>
    <name type="ordered locus">STM4414</name>
</gene>
<comment type="function">
    <text evidence="2">Catalyzes the hydrolysis of inorganic pyrophosphate (PPi) forming two phosphate ions.</text>
</comment>
<comment type="catalytic activity">
    <reaction evidence="2">
        <text>diphosphate + H2O = 2 phosphate + H(+)</text>
        <dbReference type="Rhea" id="RHEA:24576"/>
        <dbReference type="ChEBI" id="CHEBI:15377"/>
        <dbReference type="ChEBI" id="CHEBI:15378"/>
        <dbReference type="ChEBI" id="CHEBI:33019"/>
        <dbReference type="ChEBI" id="CHEBI:43474"/>
        <dbReference type="EC" id="3.6.1.1"/>
    </reaction>
</comment>
<comment type="cofactor">
    <cofactor evidence="2">
        <name>Mg(2+)</name>
        <dbReference type="ChEBI" id="CHEBI:18420"/>
    </cofactor>
</comment>
<comment type="subunit">
    <text evidence="2">Homohexamer.</text>
</comment>
<comment type="subcellular location">
    <subcellularLocation>
        <location evidence="2">Cytoplasm</location>
    </subcellularLocation>
</comment>
<comment type="similarity">
    <text evidence="2">Belongs to the PPase family.</text>
</comment>
<protein>
    <recommendedName>
        <fullName evidence="2">Inorganic pyrophosphatase</fullName>
        <ecNumber evidence="2">3.6.1.1</ecNumber>
    </recommendedName>
    <alternativeName>
        <fullName evidence="2">Pyrophosphate phospho-hydrolase</fullName>
        <shortName evidence="2">PPase</shortName>
    </alternativeName>
</protein>